<evidence type="ECO:0000255" key="1">
    <source>
        <dbReference type="HAMAP-Rule" id="MF_01342"/>
    </source>
</evidence>
<evidence type="ECO:0000256" key="2">
    <source>
        <dbReference type="SAM" id="MobiDB-lite"/>
    </source>
</evidence>
<evidence type="ECO:0000305" key="3"/>
<feature type="chain" id="PRO_0000062180" description="Large ribosomal subunit protein uL16">
    <location>
        <begin position="1"/>
        <end position="138"/>
    </location>
</feature>
<feature type="region of interest" description="Disordered" evidence="2">
    <location>
        <begin position="1"/>
        <end position="24"/>
    </location>
</feature>
<feature type="compositionally biased region" description="Basic residues" evidence="2">
    <location>
        <begin position="1"/>
        <end position="13"/>
    </location>
</feature>
<keyword id="KW-0687">Ribonucleoprotein</keyword>
<keyword id="KW-0689">Ribosomal protein</keyword>
<keyword id="KW-0694">RNA-binding</keyword>
<keyword id="KW-0699">rRNA-binding</keyword>
<keyword id="KW-0820">tRNA-binding</keyword>
<name>RL16_CUPPJ</name>
<accession>Q46WF1</accession>
<reference key="1">
    <citation type="journal article" date="2010" name="PLoS ONE">
        <title>The complete multipartite genome sequence of Cupriavidus necator JMP134, a versatile pollutant degrader.</title>
        <authorList>
            <person name="Lykidis A."/>
            <person name="Perez-Pantoja D."/>
            <person name="Ledger T."/>
            <person name="Mavromatis K."/>
            <person name="Anderson I.J."/>
            <person name="Ivanova N.N."/>
            <person name="Hooper S.D."/>
            <person name="Lapidus A."/>
            <person name="Lucas S."/>
            <person name="Gonzalez B."/>
            <person name="Kyrpides N.C."/>
        </authorList>
    </citation>
    <scope>NUCLEOTIDE SEQUENCE [LARGE SCALE GENOMIC DNA]</scope>
    <source>
        <strain>JMP134 / LMG 1197</strain>
    </source>
</reference>
<dbReference type="EMBL" id="CP000090">
    <property type="protein sequence ID" value="AAZ62532.1"/>
    <property type="molecule type" value="Genomic_DNA"/>
</dbReference>
<dbReference type="SMR" id="Q46WF1"/>
<dbReference type="STRING" id="264198.Reut_A3172"/>
<dbReference type="KEGG" id="reu:Reut_A3172"/>
<dbReference type="eggNOG" id="COG0197">
    <property type="taxonomic scope" value="Bacteria"/>
</dbReference>
<dbReference type="HOGENOM" id="CLU_078858_2_1_4"/>
<dbReference type="OrthoDB" id="9802589at2"/>
<dbReference type="GO" id="GO:0022625">
    <property type="term" value="C:cytosolic large ribosomal subunit"/>
    <property type="evidence" value="ECO:0007669"/>
    <property type="project" value="TreeGrafter"/>
</dbReference>
<dbReference type="GO" id="GO:0019843">
    <property type="term" value="F:rRNA binding"/>
    <property type="evidence" value="ECO:0007669"/>
    <property type="project" value="UniProtKB-UniRule"/>
</dbReference>
<dbReference type="GO" id="GO:0003735">
    <property type="term" value="F:structural constituent of ribosome"/>
    <property type="evidence" value="ECO:0007669"/>
    <property type="project" value="InterPro"/>
</dbReference>
<dbReference type="GO" id="GO:0000049">
    <property type="term" value="F:tRNA binding"/>
    <property type="evidence" value="ECO:0007669"/>
    <property type="project" value="UniProtKB-KW"/>
</dbReference>
<dbReference type="GO" id="GO:0006412">
    <property type="term" value="P:translation"/>
    <property type="evidence" value="ECO:0007669"/>
    <property type="project" value="UniProtKB-UniRule"/>
</dbReference>
<dbReference type="CDD" id="cd01433">
    <property type="entry name" value="Ribosomal_L16_L10e"/>
    <property type="match status" value="1"/>
</dbReference>
<dbReference type="FunFam" id="3.90.1170.10:FF:000001">
    <property type="entry name" value="50S ribosomal protein L16"/>
    <property type="match status" value="1"/>
</dbReference>
<dbReference type="Gene3D" id="3.90.1170.10">
    <property type="entry name" value="Ribosomal protein L10e/L16"/>
    <property type="match status" value="1"/>
</dbReference>
<dbReference type="HAMAP" id="MF_01342">
    <property type="entry name" value="Ribosomal_uL16"/>
    <property type="match status" value="1"/>
</dbReference>
<dbReference type="InterPro" id="IPR047873">
    <property type="entry name" value="Ribosomal_uL16"/>
</dbReference>
<dbReference type="InterPro" id="IPR000114">
    <property type="entry name" value="Ribosomal_uL16_bact-type"/>
</dbReference>
<dbReference type="InterPro" id="IPR020798">
    <property type="entry name" value="Ribosomal_uL16_CS"/>
</dbReference>
<dbReference type="InterPro" id="IPR016180">
    <property type="entry name" value="Ribosomal_uL16_dom"/>
</dbReference>
<dbReference type="InterPro" id="IPR036920">
    <property type="entry name" value="Ribosomal_uL16_sf"/>
</dbReference>
<dbReference type="NCBIfam" id="TIGR01164">
    <property type="entry name" value="rplP_bact"/>
    <property type="match status" value="1"/>
</dbReference>
<dbReference type="PANTHER" id="PTHR12220">
    <property type="entry name" value="50S/60S RIBOSOMAL PROTEIN L16"/>
    <property type="match status" value="1"/>
</dbReference>
<dbReference type="PANTHER" id="PTHR12220:SF13">
    <property type="entry name" value="LARGE RIBOSOMAL SUBUNIT PROTEIN UL16M"/>
    <property type="match status" value="1"/>
</dbReference>
<dbReference type="Pfam" id="PF00252">
    <property type="entry name" value="Ribosomal_L16"/>
    <property type="match status" value="1"/>
</dbReference>
<dbReference type="PRINTS" id="PR00060">
    <property type="entry name" value="RIBOSOMALL16"/>
</dbReference>
<dbReference type="SUPFAM" id="SSF54686">
    <property type="entry name" value="Ribosomal protein L16p/L10e"/>
    <property type="match status" value="1"/>
</dbReference>
<dbReference type="PROSITE" id="PS00586">
    <property type="entry name" value="RIBOSOMAL_L16_1"/>
    <property type="match status" value="1"/>
</dbReference>
<sequence>MLQPKRRKYRKEQKGRNTGKATRGNAVSFGEFGLKAMGRGRLTARQIESARRAMTRHIKRGGRIWIRIFPDKPISKKPAEVRMGNGKGNPEYYVAEIQPGKMLYEMDGVSEDLAREAFRLAAAKLPIATNFVVRQVGT</sequence>
<comment type="function">
    <text evidence="1">Binds 23S rRNA and is also seen to make contacts with the A and possibly P site tRNAs.</text>
</comment>
<comment type="subunit">
    <text evidence="1">Part of the 50S ribosomal subunit.</text>
</comment>
<comment type="similarity">
    <text evidence="1">Belongs to the universal ribosomal protein uL16 family.</text>
</comment>
<protein>
    <recommendedName>
        <fullName evidence="1">Large ribosomal subunit protein uL16</fullName>
    </recommendedName>
    <alternativeName>
        <fullName evidence="3">50S ribosomal protein L16</fullName>
    </alternativeName>
</protein>
<proteinExistence type="inferred from homology"/>
<gene>
    <name evidence="1" type="primary">rplP</name>
    <name type="ordered locus">Reut_A3172</name>
</gene>
<organism>
    <name type="scientific">Cupriavidus pinatubonensis (strain JMP 134 / LMG 1197)</name>
    <name type="common">Cupriavidus necator (strain JMP 134)</name>
    <dbReference type="NCBI Taxonomy" id="264198"/>
    <lineage>
        <taxon>Bacteria</taxon>
        <taxon>Pseudomonadati</taxon>
        <taxon>Pseudomonadota</taxon>
        <taxon>Betaproteobacteria</taxon>
        <taxon>Burkholderiales</taxon>
        <taxon>Burkholderiaceae</taxon>
        <taxon>Cupriavidus</taxon>
    </lineage>
</organism>